<accession>P55759</accession>
<feature type="chain" id="PRO_0000066417" description="Uncharacterized 11.3 kDa protein in psiA-psiB intergenic region">
    <location>
        <begin position="1"/>
        <end position="100"/>
    </location>
</feature>
<name>YPSI_RHILP</name>
<proteinExistence type="predicted"/>
<geneLocation type="plasmid">
    <name>sym pRP2JI</name>
</geneLocation>
<keyword id="KW-0614">Plasmid</keyword>
<sequence>MGWRNGKLTPQSGVHYVAEGLPFNWTKVNTEGRKTFSAFAELEAAKEKVAILAVRADPAFGNLWHQLNAEVVDRCRRRNPLCMQTLFQRLLSAKSCTFIA</sequence>
<reference key="1">
    <citation type="journal article" date="1994" name="Microbiology">
        <title>The psi operon of Rhizobium leguminosarum biovar phaseoli: identification of two genes whose products are located at the bacterial cell surface.</title>
        <authorList>
            <person name="Mimmack M.L."/>
            <person name="Borthakur D."/>
            <person name="Jones M.A."/>
            <person name="Downie J.A."/>
            <person name="Johnston A.W."/>
        </authorList>
    </citation>
    <scope>NUCLEOTIDE SEQUENCE [GENOMIC DNA]</scope>
    <source>
        <strain>8401</strain>
    </source>
</reference>
<organism>
    <name type="scientific">Rhizobium leguminosarum bv. phaseoli</name>
    <dbReference type="NCBI Taxonomy" id="385"/>
    <lineage>
        <taxon>Bacteria</taxon>
        <taxon>Pseudomonadati</taxon>
        <taxon>Pseudomonadota</taxon>
        <taxon>Alphaproteobacteria</taxon>
        <taxon>Hyphomicrobiales</taxon>
        <taxon>Rhizobiaceae</taxon>
        <taxon>Rhizobium/Agrobacterium group</taxon>
        <taxon>Rhizobium</taxon>
    </lineage>
</organism>
<dbReference type="EMBL" id="L26581">
    <property type="status" value="NOT_ANNOTATED_CDS"/>
    <property type="molecule type" value="Genomic_DNA"/>
</dbReference>
<dbReference type="SMR" id="P55759"/>
<dbReference type="Gene3D" id="1.10.287.660">
    <property type="entry name" value="Helix hairpin bin"/>
    <property type="match status" value="1"/>
</dbReference>
<dbReference type="InterPro" id="IPR029012">
    <property type="entry name" value="Helix_hairpin_bin_sf"/>
</dbReference>
<protein>
    <recommendedName>
        <fullName>Uncharacterized 11.3 kDa protein in psiA-psiB intergenic region</fullName>
    </recommendedName>
    <alternativeName>
        <fullName>ORF-P</fullName>
    </alternativeName>
</protein>